<reference key="1">
    <citation type="journal article" date="2004" name="PLoS Biol.">
        <title>Phylogenomics of the reproductive parasite Wolbachia pipientis wMel: a streamlined genome overrun by mobile genetic elements.</title>
        <authorList>
            <person name="Wu M."/>
            <person name="Sun L.V."/>
            <person name="Vamathevan J.J."/>
            <person name="Riegler M."/>
            <person name="DeBoy R.T."/>
            <person name="Brownlie J.C."/>
            <person name="McGraw E.A."/>
            <person name="Martin W."/>
            <person name="Esser C."/>
            <person name="Ahmadinejad N."/>
            <person name="Wiegand C."/>
            <person name="Madupu R."/>
            <person name="Beanan M.J."/>
            <person name="Brinkac L.M."/>
            <person name="Daugherty S.C."/>
            <person name="Durkin A.S."/>
            <person name="Kolonay J.F."/>
            <person name="Nelson W.C."/>
            <person name="Mohamoud Y."/>
            <person name="Lee P."/>
            <person name="Berry K.J."/>
            <person name="Young M.B."/>
            <person name="Utterback T.R."/>
            <person name="Weidman J.F."/>
            <person name="Nierman W.C."/>
            <person name="Paulsen I.T."/>
            <person name="Nelson K.E."/>
            <person name="Tettelin H."/>
            <person name="O'Neill S.L."/>
            <person name="Eisen J.A."/>
        </authorList>
    </citation>
    <scope>NUCLEOTIDE SEQUENCE [LARGE SCALE GENOMIC DNA]</scope>
</reference>
<gene>
    <name evidence="1" type="primary">ctaA</name>
    <name type="ordered locus">WD_0432</name>
</gene>
<organism>
    <name type="scientific">Wolbachia pipientis wMel</name>
    <dbReference type="NCBI Taxonomy" id="163164"/>
    <lineage>
        <taxon>Bacteria</taxon>
        <taxon>Pseudomonadati</taxon>
        <taxon>Pseudomonadota</taxon>
        <taxon>Alphaproteobacteria</taxon>
        <taxon>Rickettsiales</taxon>
        <taxon>Anaplasmataceae</taxon>
        <taxon>Wolbachieae</taxon>
        <taxon>Wolbachia</taxon>
    </lineage>
</organism>
<protein>
    <recommendedName>
        <fullName evidence="1">Heme A synthase</fullName>
        <shortName evidence="1">HAS</shortName>
        <ecNumber evidence="1">1.17.99.9</ecNumber>
    </recommendedName>
    <alternativeName>
        <fullName evidence="1">Cytochrome aa3-controlling protein</fullName>
    </alternativeName>
</protein>
<keyword id="KW-1003">Cell membrane</keyword>
<keyword id="KW-0350">Heme biosynthesis</keyword>
<keyword id="KW-0408">Iron</keyword>
<keyword id="KW-0472">Membrane</keyword>
<keyword id="KW-0479">Metal-binding</keyword>
<keyword id="KW-0560">Oxidoreductase</keyword>
<keyword id="KW-0812">Transmembrane</keyword>
<keyword id="KW-1133">Transmembrane helix</keyword>
<accession>Q73HV8</accession>
<name>CTAA_WOLPM</name>
<dbReference type="EC" id="1.17.99.9" evidence="1"/>
<dbReference type="EMBL" id="AE017196">
    <property type="protein sequence ID" value="AAS14155.1"/>
    <property type="molecule type" value="Genomic_DNA"/>
</dbReference>
<dbReference type="SMR" id="Q73HV8"/>
<dbReference type="EnsemblBacteria" id="AAS14155">
    <property type="protein sequence ID" value="AAS14155"/>
    <property type="gene ID" value="WD_0432"/>
</dbReference>
<dbReference type="KEGG" id="wol:WD_0432"/>
<dbReference type="eggNOG" id="COG1612">
    <property type="taxonomic scope" value="Bacteria"/>
</dbReference>
<dbReference type="UniPathway" id="UPA00269">
    <property type="reaction ID" value="UER00713"/>
</dbReference>
<dbReference type="Proteomes" id="UP000008215">
    <property type="component" value="Chromosome"/>
</dbReference>
<dbReference type="GO" id="GO:0005886">
    <property type="term" value="C:plasma membrane"/>
    <property type="evidence" value="ECO:0007669"/>
    <property type="project" value="UniProtKB-SubCell"/>
</dbReference>
<dbReference type="GO" id="GO:0046872">
    <property type="term" value="F:metal ion binding"/>
    <property type="evidence" value="ECO:0007669"/>
    <property type="project" value="UniProtKB-KW"/>
</dbReference>
<dbReference type="GO" id="GO:0016653">
    <property type="term" value="F:oxidoreductase activity, acting on NAD(P)H, heme protein as acceptor"/>
    <property type="evidence" value="ECO:0007669"/>
    <property type="project" value="InterPro"/>
</dbReference>
<dbReference type="GO" id="GO:0006784">
    <property type="term" value="P:heme A biosynthetic process"/>
    <property type="evidence" value="ECO:0007669"/>
    <property type="project" value="UniProtKB-UniRule"/>
</dbReference>
<dbReference type="HAMAP" id="MF_01665">
    <property type="entry name" value="HemeA_synth_type2"/>
    <property type="match status" value="1"/>
</dbReference>
<dbReference type="InterPro" id="IPR003780">
    <property type="entry name" value="COX15/CtaA_fam"/>
</dbReference>
<dbReference type="InterPro" id="IPR023754">
    <property type="entry name" value="HemeA_Synthase_type2"/>
</dbReference>
<dbReference type="PANTHER" id="PTHR23289">
    <property type="entry name" value="CYTOCHROME C OXIDASE ASSEMBLY PROTEIN COX15"/>
    <property type="match status" value="1"/>
</dbReference>
<dbReference type="PANTHER" id="PTHR23289:SF2">
    <property type="entry name" value="CYTOCHROME C OXIDASE ASSEMBLY PROTEIN COX15 HOMOLOG"/>
    <property type="match status" value="1"/>
</dbReference>
<dbReference type="Pfam" id="PF02628">
    <property type="entry name" value="COX15-CtaA"/>
    <property type="match status" value="1"/>
</dbReference>
<evidence type="ECO:0000255" key="1">
    <source>
        <dbReference type="HAMAP-Rule" id="MF_01665"/>
    </source>
</evidence>
<feature type="chain" id="PRO_0000349087" description="Heme A synthase">
    <location>
        <begin position="1"/>
        <end position="350"/>
    </location>
</feature>
<feature type="transmembrane region" description="Helical" evidence="1">
    <location>
        <begin position="14"/>
        <end position="34"/>
    </location>
</feature>
<feature type="transmembrane region" description="Helical" evidence="1">
    <location>
        <begin position="95"/>
        <end position="115"/>
    </location>
</feature>
<feature type="transmembrane region" description="Helical" evidence="1">
    <location>
        <begin position="125"/>
        <end position="145"/>
    </location>
</feature>
<feature type="transmembrane region" description="Helical" evidence="1">
    <location>
        <begin position="162"/>
        <end position="182"/>
    </location>
</feature>
<feature type="transmembrane region" description="Helical" evidence="1">
    <location>
        <begin position="202"/>
        <end position="222"/>
    </location>
</feature>
<feature type="transmembrane region" description="Helical" evidence="1">
    <location>
        <begin position="260"/>
        <end position="280"/>
    </location>
</feature>
<feature type="transmembrane region" description="Helical" evidence="1">
    <location>
        <begin position="296"/>
        <end position="316"/>
    </location>
</feature>
<feature type="transmembrane region" description="Helical" evidence="1">
    <location>
        <begin position="317"/>
        <end position="337"/>
    </location>
</feature>
<feature type="binding site" description="axial binding residue" evidence="1">
    <location>
        <position position="264"/>
    </location>
    <ligand>
        <name>heme</name>
        <dbReference type="ChEBI" id="CHEBI:30413"/>
    </ligand>
    <ligandPart>
        <name>Fe</name>
        <dbReference type="ChEBI" id="CHEBI:18248"/>
    </ligandPart>
</feature>
<feature type="binding site" description="axial binding residue" evidence="1">
    <location>
        <position position="318"/>
    </location>
    <ligand>
        <name>heme</name>
        <dbReference type="ChEBI" id="CHEBI:30413"/>
    </ligand>
    <ligandPart>
        <name>Fe</name>
        <dbReference type="ChEBI" id="CHEBI:18248"/>
    </ligandPart>
</feature>
<comment type="function">
    <text evidence="1">Catalyzes the conversion of heme O to heme A by two successive hydroxylations of the methyl group at C8. The first hydroxylation forms heme I, the second hydroxylation results in an unstable dihydroxymethyl group, which spontaneously dehydrates, resulting in the formyl group of heme A.</text>
</comment>
<comment type="catalytic activity">
    <reaction evidence="1">
        <text>Fe(II)-heme o + 2 A + H2O = Fe(II)-heme a + 2 AH2</text>
        <dbReference type="Rhea" id="RHEA:63388"/>
        <dbReference type="ChEBI" id="CHEBI:13193"/>
        <dbReference type="ChEBI" id="CHEBI:15377"/>
        <dbReference type="ChEBI" id="CHEBI:17499"/>
        <dbReference type="ChEBI" id="CHEBI:60530"/>
        <dbReference type="ChEBI" id="CHEBI:61715"/>
        <dbReference type="EC" id="1.17.99.9"/>
    </reaction>
    <physiologicalReaction direction="left-to-right" evidence="1">
        <dbReference type="Rhea" id="RHEA:63389"/>
    </physiologicalReaction>
</comment>
<comment type="cofactor">
    <cofactor evidence="1">
        <name>heme b</name>
        <dbReference type="ChEBI" id="CHEBI:60344"/>
    </cofactor>
</comment>
<comment type="pathway">
    <text evidence="1">Porphyrin-containing compound metabolism; heme A biosynthesis; heme A from heme O: step 1/1.</text>
</comment>
<comment type="subunit">
    <text evidence="1">Interacts with CtaB.</text>
</comment>
<comment type="subcellular location">
    <subcellularLocation>
        <location evidence="1">Cell membrane</location>
        <topology evidence="1">Multi-pass membrane protein</topology>
    </subcellularLocation>
</comment>
<comment type="similarity">
    <text evidence="1">Belongs to the COX15/CtaA family. Type 2 subfamily.</text>
</comment>
<sequence length="350" mass="39906">MEQNSAWFMEAKPVAIWLFLCSVMVILMVGIGGFTRLSKAGLSITEWKPITGTLPPLSEQDWLQEKLKYEATPEYKALNYGISMEEFRAIYLIEYVHRLVARLTGLVFVLPFIYFTLRRKISKKVVIKLFVALLFGALQAFAGWYMVKSGLVAKPHVSHYRLALHLLLALIIFALFSYQFFDYQIRPKQTKLKISCNTKYYVGIILVLIMIQIIFGAFVAGLNAGLIYNTFPLMDGQIVPEDLFFLQPTWLNIFENRATVQFIHRALALLILTLVVILTVKNASIKPVYIMLLSVIIQIILGVITLLLHIPIAIAIAHQVFSFILFGSSLYFLCYLRKQTTSPICTFFPS</sequence>
<proteinExistence type="inferred from homology"/>